<keyword id="KW-1185">Reference proteome</keyword>
<keyword id="KW-0687">Ribonucleoprotein</keyword>
<keyword id="KW-0689">Ribosomal protein</keyword>
<keyword id="KW-0694">RNA-binding</keyword>
<keyword id="KW-0699">rRNA-binding</keyword>
<gene>
    <name evidence="1" type="primary">rpsT</name>
    <name type="ordered locus">CPE2042</name>
</gene>
<feature type="chain" id="PRO_0000167950" description="Small ribosomal subunit protein bS20">
    <location>
        <begin position="1"/>
        <end position="87"/>
    </location>
</feature>
<name>RS20_CLOPE</name>
<evidence type="ECO:0000255" key="1">
    <source>
        <dbReference type="HAMAP-Rule" id="MF_00500"/>
    </source>
</evidence>
<evidence type="ECO:0000305" key="2"/>
<accession>Q8XIS2</accession>
<organism>
    <name type="scientific">Clostridium perfringens (strain 13 / Type A)</name>
    <dbReference type="NCBI Taxonomy" id="195102"/>
    <lineage>
        <taxon>Bacteria</taxon>
        <taxon>Bacillati</taxon>
        <taxon>Bacillota</taxon>
        <taxon>Clostridia</taxon>
        <taxon>Eubacteriales</taxon>
        <taxon>Clostridiaceae</taxon>
        <taxon>Clostridium</taxon>
    </lineage>
</organism>
<dbReference type="EMBL" id="BA000016">
    <property type="protein sequence ID" value="BAB81748.1"/>
    <property type="molecule type" value="Genomic_DNA"/>
</dbReference>
<dbReference type="RefSeq" id="WP_011010732.1">
    <property type="nucleotide sequence ID" value="NC_003366.1"/>
</dbReference>
<dbReference type="SMR" id="Q8XIS2"/>
<dbReference type="STRING" id="195102.gene:10491312"/>
<dbReference type="KEGG" id="cpe:CPE2042"/>
<dbReference type="HOGENOM" id="CLU_160655_1_0_9"/>
<dbReference type="Proteomes" id="UP000000818">
    <property type="component" value="Chromosome"/>
</dbReference>
<dbReference type="GO" id="GO:0005829">
    <property type="term" value="C:cytosol"/>
    <property type="evidence" value="ECO:0007669"/>
    <property type="project" value="TreeGrafter"/>
</dbReference>
<dbReference type="GO" id="GO:0015935">
    <property type="term" value="C:small ribosomal subunit"/>
    <property type="evidence" value="ECO:0007669"/>
    <property type="project" value="TreeGrafter"/>
</dbReference>
<dbReference type="GO" id="GO:0070181">
    <property type="term" value="F:small ribosomal subunit rRNA binding"/>
    <property type="evidence" value="ECO:0007669"/>
    <property type="project" value="TreeGrafter"/>
</dbReference>
<dbReference type="GO" id="GO:0003735">
    <property type="term" value="F:structural constituent of ribosome"/>
    <property type="evidence" value="ECO:0007669"/>
    <property type="project" value="InterPro"/>
</dbReference>
<dbReference type="GO" id="GO:0006412">
    <property type="term" value="P:translation"/>
    <property type="evidence" value="ECO:0007669"/>
    <property type="project" value="UniProtKB-UniRule"/>
</dbReference>
<dbReference type="FunFam" id="1.20.58.110:FF:000001">
    <property type="entry name" value="30S ribosomal protein S20"/>
    <property type="match status" value="1"/>
</dbReference>
<dbReference type="Gene3D" id="1.20.58.110">
    <property type="entry name" value="Ribosomal protein S20"/>
    <property type="match status" value="1"/>
</dbReference>
<dbReference type="HAMAP" id="MF_00500">
    <property type="entry name" value="Ribosomal_bS20"/>
    <property type="match status" value="1"/>
</dbReference>
<dbReference type="InterPro" id="IPR002583">
    <property type="entry name" value="Ribosomal_bS20"/>
</dbReference>
<dbReference type="InterPro" id="IPR036510">
    <property type="entry name" value="Ribosomal_bS20_sf"/>
</dbReference>
<dbReference type="NCBIfam" id="TIGR00029">
    <property type="entry name" value="S20"/>
    <property type="match status" value="1"/>
</dbReference>
<dbReference type="PANTHER" id="PTHR33398">
    <property type="entry name" value="30S RIBOSOMAL PROTEIN S20"/>
    <property type="match status" value="1"/>
</dbReference>
<dbReference type="PANTHER" id="PTHR33398:SF1">
    <property type="entry name" value="SMALL RIBOSOMAL SUBUNIT PROTEIN BS20C"/>
    <property type="match status" value="1"/>
</dbReference>
<dbReference type="Pfam" id="PF01649">
    <property type="entry name" value="Ribosomal_S20p"/>
    <property type="match status" value="1"/>
</dbReference>
<dbReference type="SUPFAM" id="SSF46992">
    <property type="entry name" value="Ribosomal protein S20"/>
    <property type="match status" value="1"/>
</dbReference>
<comment type="function">
    <text evidence="1">Binds directly to 16S ribosomal RNA.</text>
</comment>
<comment type="similarity">
    <text evidence="1">Belongs to the bacterial ribosomal protein bS20 family.</text>
</comment>
<proteinExistence type="inferred from homology"/>
<reference key="1">
    <citation type="journal article" date="2002" name="Proc. Natl. Acad. Sci. U.S.A.">
        <title>Complete genome sequence of Clostridium perfringens, an anaerobic flesh-eater.</title>
        <authorList>
            <person name="Shimizu T."/>
            <person name="Ohtani K."/>
            <person name="Hirakawa H."/>
            <person name="Ohshima K."/>
            <person name="Yamashita A."/>
            <person name="Shiba T."/>
            <person name="Ogasawara N."/>
            <person name="Hattori M."/>
            <person name="Kuhara S."/>
            <person name="Hayashi H."/>
        </authorList>
    </citation>
    <scope>NUCLEOTIDE SEQUENCE [LARGE SCALE GENOMIC DNA]</scope>
    <source>
        <strain>13 / Type A</strain>
    </source>
</reference>
<sequence>MANIKSAKKRIKVTEKKTLRNKMIKSALKTAIKKFEVAVQANNKAEAATLYVEAARALDMSASKGVVHKNMAARKKSRLAAKLNAMA</sequence>
<protein>
    <recommendedName>
        <fullName evidence="1">Small ribosomal subunit protein bS20</fullName>
    </recommendedName>
    <alternativeName>
        <fullName evidence="2">30S ribosomal protein S20</fullName>
    </alternativeName>
</protein>